<evidence type="ECO:0000255" key="1">
    <source>
        <dbReference type="HAMAP-Rule" id="MF_00054"/>
    </source>
</evidence>
<sequence length="704" mass="77959">MARQVALDKVRNIGIMAHIDAGKTTTTERILYYTGRLHKMGEVHEGGATMDWMEQEKERGITITSAATTCFWTPKFGNYSGVNHRINIIDTPGHVDFTVEVERSLRVLDGAVALFCAVGGVEPQSETVWRQANKYGVPRIAYVNKMDRTGADFFNAVKAIRERLGANPVPIQIPIGEGEMFAGFVDLIRMKGIIYDKEDGSTYEEVAIPHDLENEARTWRINMLEAVSELDETLLEKYLNGDDITEEEIRSVLRQATLNVSIIPVLCGSSFKNKGVQFMLDAVIDYLASPVDDGVVEGHDPRTEEEIVRQPKDEEPFAALAFKIATDPFVGKLTFFRVYSGVLNAGSYVLNSVTGKKERVGRVLQMHSNKREERDAVYAGDIAAAVGLKEVRTGDTLCDENKPIVLEKMVFPEPVIEIAVEPKTKADNDKLGMSLAKLAEEDPTFRVKTDEETGQTLIAGMGELHLEVLVDRLKREFKVEANVGQPQVAYRETIRGTVEHEGKFVRQSGGKGQFGLVVLRLEPLEEGKGYEFVDEIKGGAIPKEYIPSVNAGIQQAMKDGVVAGFPMQDVKVALIDGKYHEVDSSEMAFKIAGSIGFKGAAKKANPVLLEPIMKVEVITPEEYLGDVMGDLSGRRGHIEGMGERAGAQFVKAKVPLSEMFGYSTTLRSMTQGRANYSMEFETYREVPRNIAETLQEKRVGKDSE</sequence>
<dbReference type="EMBL" id="CP001099">
    <property type="protein sequence ID" value="ACF10601.1"/>
    <property type="molecule type" value="Genomic_DNA"/>
</dbReference>
<dbReference type="RefSeq" id="WP_012501436.1">
    <property type="nucleotide sequence ID" value="NC_011027.1"/>
</dbReference>
<dbReference type="SMR" id="B3QR64"/>
<dbReference type="STRING" id="517417.Cpar_0174"/>
<dbReference type="KEGG" id="cpc:Cpar_0174"/>
<dbReference type="eggNOG" id="COG0480">
    <property type="taxonomic scope" value="Bacteria"/>
</dbReference>
<dbReference type="HOGENOM" id="CLU_002794_4_1_10"/>
<dbReference type="OrthoDB" id="9801591at2"/>
<dbReference type="Proteomes" id="UP000008811">
    <property type="component" value="Chromosome"/>
</dbReference>
<dbReference type="GO" id="GO:0005737">
    <property type="term" value="C:cytoplasm"/>
    <property type="evidence" value="ECO:0007669"/>
    <property type="project" value="UniProtKB-SubCell"/>
</dbReference>
<dbReference type="GO" id="GO:0005525">
    <property type="term" value="F:GTP binding"/>
    <property type="evidence" value="ECO:0007669"/>
    <property type="project" value="UniProtKB-UniRule"/>
</dbReference>
<dbReference type="GO" id="GO:0003924">
    <property type="term" value="F:GTPase activity"/>
    <property type="evidence" value="ECO:0007669"/>
    <property type="project" value="InterPro"/>
</dbReference>
<dbReference type="GO" id="GO:0003746">
    <property type="term" value="F:translation elongation factor activity"/>
    <property type="evidence" value="ECO:0007669"/>
    <property type="project" value="UniProtKB-UniRule"/>
</dbReference>
<dbReference type="GO" id="GO:0032790">
    <property type="term" value="P:ribosome disassembly"/>
    <property type="evidence" value="ECO:0007669"/>
    <property type="project" value="TreeGrafter"/>
</dbReference>
<dbReference type="CDD" id="cd01886">
    <property type="entry name" value="EF-G"/>
    <property type="match status" value="1"/>
</dbReference>
<dbReference type="CDD" id="cd16262">
    <property type="entry name" value="EFG_III"/>
    <property type="match status" value="1"/>
</dbReference>
<dbReference type="CDD" id="cd01434">
    <property type="entry name" value="EFG_mtEFG1_IV"/>
    <property type="match status" value="1"/>
</dbReference>
<dbReference type="CDD" id="cd03713">
    <property type="entry name" value="EFG_mtEFG_C"/>
    <property type="match status" value="1"/>
</dbReference>
<dbReference type="CDD" id="cd04088">
    <property type="entry name" value="EFG_mtEFG_II"/>
    <property type="match status" value="1"/>
</dbReference>
<dbReference type="FunFam" id="2.40.30.10:FF:000006">
    <property type="entry name" value="Elongation factor G"/>
    <property type="match status" value="1"/>
</dbReference>
<dbReference type="FunFam" id="3.30.230.10:FF:000003">
    <property type="entry name" value="Elongation factor G"/>
    <property type="match status" value="1"/>
</dbReference>
<dbReference type="FunFam" id="3.30.70.240:FF:000001">
    <property type="entry name" value="Elongation factor G"/>
    <property type="match status" value="1"/>
</dbReference>
<dbReference type="FunFam" id="3.30.70.870:FF:000001">
    <property type="entry name" value="Elongation factor G"/>
    <property type="match status" value="1"/>
</dbReference>
<dbReference type="FunFam" id="3.40.50.300:FF:000029">
    <property type="entry name" value="Elongation factor G"/>
    <property type="match status" value="1"/>
</dbReference>
<dbReference type="Gene3D" id="3.30.230.10">
    <property type="match status" value="1"/>
</dbReference>
<dbReference type="Gene3D" id="3.30.70.240">
    <property type="match status" value="1"/>
</dbReference>
<dbReference type="Gene3D" id="3.30.70.870">
    <property type="entry name" value="Elongation Factor G (Translational Gtpase), domain 3"/>
    <property type="match status" value="1"/>
</dbReference>
<dbReference type="Gene3D" id="3.40.50.300">
    <property type="entry name" value="P-loop containing nucleotide triphosphate hydrolases"/>
    <property type="match status" value="1"/>
</dbReference>
<dbReference type="Gene3D" id="2.40.30.10">
    <property type="entry name" value="Translation factors"/>
    <property type="match status" value="1"/>
</dbReference>
<dbReference type="HAMAP" id="MF_00054_B">
    <property type="entry name" value="EF_G_EF_2_B"/>
    <property type="match status" value="1"/>
</dbReference>
<dbReference type="InterPro" id="IPR041095">
    <property type="entry name" value="EFG_II"/>
</dbReference>
<dbReference type="InterPro" id="IPR009022">
    <property type="entry name" value="EFG_III"/>
</dbReference>
<dbReference type="InterPro" id="IPR035647">
    <property type="entry name" value="EFG_III/V"/>
</dbReference>
<dbReference type="InterPro" id="IPR047872">
    <property type="entry name" value="EFG_IV"/>
</dbReference>
<dbReference type="InterPro" id="IPR035649">
    <property type="entry name" value="EFG_V"/>
</dbReference>
<dbReference type="InterPro" id="IPR000640">
    <property type="entry name" value="EFG_V-like"/>
</dbReference>
<dbReference type="InterPro" id="IPR004161">
    <property type="entry name" value="EFTu-like_2"/>
</dbReference>
<dbReference type="InterPro" id="IPR031157">
    <property type="entry name" value="G_TR_CS"/>
</dbReference>
<dbReference type="InterPro" id="IPR027417">
    <property type="entry name" value="P-loop_NTPase"/>
</dbReference>
<dbReference type="InterPro" id="IPR020568">
    <property type="entry name" value="Ribosomal_Su5_D2-typ_SF"/>
</dbReference>
<dbReference type="InterPro" id="IPR014721">
    <property type="entry name" value="Ribsml_uS5_D2-typ_fold_subgr"/>
</dbReference>
<dbReference type="InterPro" id="IPR005225">
    <property type="entry name" value="Small_GTP-bd"/>
</dbReference>
<dbReference type="InterPro" id="IPR000795">
    <property type="entry name" value="T_Tr_GTP-bd_dom"/>
</dbReference>
<dbReference type="InterPro" id="IPR009000">
    <property type="entry name" value="Transl_B-barrel_sf"/>
</dbReference>
<dbReference type="InterPro" id="IPR004540">
    <property type="entry name" value="Transl_elong_EFG/EF2"/>
</dbReference>
<dbReference type="InterPro" id="IPR005517">
    <property type="entry name" value="Transl_elong_EFG/EF2_IV"/>
</dbReference>
<dbReference type="NCBIfam" id="TIGR00484">
    <property type="entry name" value="EF-G"/>
    <property type="match status" value="1"/>
</dbReference>
<dbReference type="NCBIfam" id="NF009381">
    <property type="entry name" value="PRK12740.1-5"/>
    <property type="match status" value="1"/>
</dbReference>
<dbReference type="NCBIfam" id="TIGR00231">
    <property type="entry name" value="small_GTP"/>
    <property type="match status" value="1"/>
</dbReference>
<dbReference type="PANTHER" id="PTHR43261:SF1">
    <property type="entry name" value="RIBOSOME-RELEASING FACTOR 2, MITOCHONDRIAL"/>
    <property type="match status" value="1"/>
</dbReference>
<dbReference type="PANTHER" id="PTHR43261">
    <property type="entry name" value="TRANSLATION ELONGATION FACTOR G-RELATED"/>
    <property type="match status" value="1"/>
</dbReference>
<dbReference type="Pfam" id="PF00679">
    <property type="entry name" value="EFG_C"/>
    <property type="match status" value="1"/>
</dbReference>
<dbReference type="Pfam" id="PF14492">
    <property type="entry name" value="EFG_III"/>
    <property type="match status" value="1"/>
</dbReference>
<dbReference type="Pfam" id="PF03764">
    <property type="entry name" value="EFG_IV"/>
    <property type="match status" value="1"/>
</dbReference>
<dbReference type="Pfam" id="PF00009">
    <property type="entry name" value="GTP_EFTU"/>
    <property type="match status" value="1"/>
</dbReference>
<dbReference type="Pfam" id="PF03144">
    <property type="entry name" value="GTP_EFTU_D2"/>
    <property type="match status" value="1"/>
</dbReference>
<dbReference type="PRINTS" id="PR00315">
    <property type="entry name" value="ELONGATNFCT"/>
</dbReference>
<dbReference type="SMART" id="SM00838">
    <property type="entry name" value="EFG_C"/>
    <property type="match status" value="1"/>
</dbReference>
<dbReference type="SMART" id="SM00889">
    <property type="entry name" value="EFG_IV"/>
    <property type="match status" value="1"/>
</dbReference>
<dbReference type="SUPFAM" id="SSF54980">
    <property type="entry name" value="EF-G C-terminal domain-like"/>
    <property type="match status" value="2"/>
</dbReference>
<dbReference type="SUPFAM" id="SSF52540">
    <property type="entry name" value="P-loop containing nucleoside triphosphate hydrolases"/>
    <property type="match status" value="1"/>
</dbReference>
<dbReference type="SUPFAM" id="SSF54211">
    <property type="entry name" value="Ribosomal protein S5 domain 2-like"/>
    <property type="match status" value="1"/>
</dbReference>
<dbReference type="SUPFAM" id="SSF50447">
    <property type="entry name" value="Translation proteins"/>
    <property type="match status" value="1"/>
</dbReference>
<dbReference type="PROSITE" id="PS00301">
    <property type="entry name" value="G_TR_1"/>
    <property type="match status" value="1"/>
</dbReference>
<dbReference type="PROSITE" id="PS51722">
    <property type="entry name" value="G_TR_2"/>
    <property type="match status" value="1"/>
</dbReference>
<keyword id="KW-0963">Cytoplasm</keyword>
<keyword id="KW-0251">Elongation factor</keyword>
<keyword id="KW-0342">GTP-binding</keyword>
<keyword id="KW-0547">Nucleotide-binding</keyword>
<keyword id="KW-0648">Protein biosynthesis</keyword>
<protein>
    <recommendedName>
        <fullName evidence="1">Elongation factor G</fullName>
        <shortName evidence="1">EF-G</shortName>
    </recommendedName>
</protein>
<reference key="1">
    <citation type="submission" date="2008-06" db="EMBL/GenBank/DDBJ databases">
        <title>Complete sequence of Chlorobaculum parvum NCIB 8327.</title>
        <authorList>
            <consortium name="US DOE Joint Genome Institute"/>
            <person name="Lucas S."/>
            <person name="Copeland A."/>
            <person name="Lapidus A."/>
            <person name="Glavina del Rio T."/>
            <person name="Dalin E."/>
            <person name="Tice H."/>
            <person name="Bruce D."/>
            <person name="Goodwin L."/>
            <person name="Pitluck S."/>
            <person name="Schmutz J."/>
            <person name="Larimer F."/>
            <person name="Land M."/>
            <person name="Hauser L."/>
            <person name="Kyrpides N."/>
            <person name="Mikhailova N."/>
            <person name="Zhao F."/>
            <person name="Li T."/>
            <person name="Liu Z."/>
            <person name="Overmann J."/>
            <person name="Bryant D.A."/>
            <person name="Richardson P."/>
        </authorList>
    </citation>
    <scope>NUCLEOTIDE SEQUENCE [LARGE SCALE GENOMIC DNA]</scope>
    <source>
        <strain>DSM 263 / NCIMB 8327</strain>
    </source>
</reference>
<organism>
    <name type="scientific">Chlorobaculum parvum (strain DSM 263 / NCIMB 8327)</name>
    <name type="common">Chlorobium vibrioforme subsp. thiosulfatophilum</name>
    <dbReference type="NCBI Taxonomy" id="517417"/>
    <lineage>
        <taxon>Bacteria</taxon>
        <taxon>Pseudomonadati</taxon>
        <taxon>Chlorobiota</taxon>
        <taxon>Chlorobiia</taxon>
        <taxon>Chlorobiales</taxon>
        <taxon>Chlorobiaceae</taxon>
        <taxon>Chlorobaculum</taxon>
    </lineage>
</organism>
<name>EFG_CHLP8</name>
<proteinExistence type="inferred from homology"/>
<comment type="function">
    <text evidence="1">Catalyzes the GTP-dependent ribosomal translocation step during translation elongation. During this step, the ribosome changes from the pre-translocational (PRE) to the post-translocational (POST) state as the newly formed A-site-bound peptidyl-tRNA and P-site-bound deacylated tRNA move to the P and E sites, respectively. Catalyzes the coordinated movement of the two tRNA molecules, the mRNA and conformational changes in the ribosome.</text>
</comment>
<comment type="subcellular location">
    <subcellularLocation>
        <location evidence="1">Cytoplasm</location>
    </subcellularLocation>
</comment>
<comment type="similarity">
    <text evidence="1">Belongs to the TRAFAC class translation factor GTPase superfamily. Classic translation factor GTPase family. EF-G/EF-2 subfamily.</text>
</comment>
<accession>B3QR64</accession>
<gene>
    <name evidence="1" type="primary">fusA</name>
    <name type="ordered locus">Cpar_0174</name>
</gene>
<feature type="chain" id="PRO_1000091696" description="Elongation factor G">
    <location>
        <begin position="1"/>
        <end position="704"/>
    </location>
</feature>
<feature type="domain" description="tr-type G">
    <location>
        <begin position="8"/>
        <end position="291"/>
    </location>
</feature>
<feature type="binding site" evidence="1">
    <location>
        <begin position="17"/>
        <end position="24"/>
    </location>
    <ligand>
        <name>GTP</name>
        <dbReference type="ChEBI" id="CHEBI:37565"/>
    </ligand>
</feature>
<feature type="binding site" evidence="1">
    <location>
        <begin position="90"/>
        <end position="94"/>
    </location>
    <ligand>
        <name>GTP</name>
        <dbReference type="ChEBI" id="CHEBI:37565"/>
    </ligand>
</feature>
<feature type="binding site" evidence="1">
    <location>
        <begin position="144"/>
        <end position="147"/>
    </location>
    <ligand>
        <name>GTP</name>
        <dbReference type="ChEBI" id="CHEBI:37565"/>
    </ligand>
</feature>